<evidence type="ECO:0000255" key="1">
    <source>
        <dbReference type="HAMAP-Rule" id="MF_00291"/>
    </source>
</evidence>
<evidence type="ECO:0000305" key="2"/>
<organism>
    <name type="scientific">Glaesserella parasuis serovar 5 (strain SH0165)</name>
    <name type="common">Haemophilus parasuis</name>
    <dbReference type="NCBI Taxonomy" id="557723"/>
    <lineage>
        <taxon>Bacteria</taxon>
        <taxon>Pseudomonadati</taxon>
        <taxon>Pseudomonadota</taxon>
        <taxon>Gammaproteobacteria</taxon>
        <taxon>Pasteurellales</taxon>
        <taxon>Pasteurellaceae</taxon>
        <taxon>Glaesserella</taxon>
    </lineage>
</organism>
<dbReference type="EMBL" id="CP001321">
    <property type="protein sequence ID" value="ACL31969.1"/>
    <property type="molecule type" value="Genomic_DNA"/>
</dbReference>
<dbReference type="RefSeq" id="WP_012621651.1">
    <property type="nucleotide sequence ID" value="NC_011852.1"/>
</dbReference>
<dbReference type="SMR" id="B8F3R7"/>
<dbReference type="STRING" id="557723.HAPS_0281"/>
<dbReference type="GeneID" id="66618714"/>
<dbReference type="KEGG" id="hap:HAPS_0281"/>
<dbReference type="HOGENOM" id="CLU_040318_1_0_6"/>
<dbReference type="Proteomes" id="UP000006743">
    <property type="component" value="Chromosome"/>
</dbReference>
<dbReference type="GO" id="GO:0022627">
    <property type="term" value="C:cytosolic small ribosomal subunit"/>
    <property type="evidence" value="ECO:0007669"/>
    <property type="project" value="TreeGrafter"/>
</dbReference>
<dbReference type="GO" id="GO:0003735">
    <property type="term" value="F:structural constituent of ribosome"/>
    <property type="evidence" value="ECO:0007669"/>
    <property type="project" value="InterPro"/>
</dbReference>
<dbReference type="GO" id="GO:0006412">
    <property type="term" value="P:translation"/>
    <property type="evidence" value="ECO:0007669"/>
    <property type="project" value="UniProtKB-UniRule"/>
</dbReference>
<dbReference type="CDD" id="cd01425">
    <property type="entry name" value="RPS2"/>
    <property type="match status" value="1"/>
</dbReference>
<dbReference type="FunFam" id="1.10.287.610:FF:000001">
    <property type="entry name" value="30S ribosomal protein S2"/>
    <property type="match status" value="1"/>
</dbReference>
<dbReference type="Gene3D" id="3.40.50.10490">
    <property type="entry name" value="Glucose-6-phosphate isomerase like protein, domain 1"/>
    <property type="match status" value="1"/>
</dbReference>
<dbReference type="Gene3D" id="1.10.287.610">
    <property type="entry name" value="Helix hairpin bin"/>
    <property type="match status" value="1"/>
</dbReference>
<dbReference type="HAMAP" id="MF_00291_B">
    <property type="entry name" value="Ribosomal_uS2_B"/>
    <property type="match status" value="1"/>
</dbReference>
<dbReference type="InterPro" id="IPR001865">
    <property type="entry name" value="Ribosomal_uS2"/>
</dbReference>
<dbReference type="InterPro" id="IPR005706">
    <property type="entry name" value="Ribosomal_uS2_bac/mit/plastid"/>
</dbReference>
<dbReference type="InterPro" id="IPR018130">
    <property type="entry name" value="Ribosomal_uS2_CS"/>
</dbReference>
<dbReference type="InterPro" id="IPR023591">
    <property type="entry name" value="Ribosomal_uS2_flav_dom_sf"/>
</dbReference>
<dbReference type="NCBIfam" id="TIGR01011">
    <property type="entry name" value="rpsB_bact"/>
    <property type="match status" value="1"/>
</dbReference>
<dbReference type="PANTHER" id="PTHR12534">
    <property type="entry name" value="30S RIBOSOMAL PROTEIN S2 PROKARYOTIC AND ORGANELLAR"/>
    <property type="match status" value="1"/>
</dbReference>
<dbReference type="PANTHER" id="PTHR12534:SF0">
    <property type="entry name" value="SMALL RIBOSOMAL SUBUNIT PROTEIN US2M"/>
    <property type="match status" value="1"/>
</dbReference>
<dbReference type="Pfam" id="PF00318">
    <property type="entry name" value="Ribosomal_S2"/>
    <property type="match status" value="1"/>
</dbReference>
<dbReference type="PRINTS" id="PR00395">
    <property type="entry name" value="RIBOSOMALS2"/>
</dbReference>
<dbReference type="SUPFAM" id="SSF52313">
    <property type="entry name" value="Ribosomal protein S2"/>
    <property type="match status" value="1"/>
</dbReference>
<dbReference type="PROSITE" id="PS00962">
    <property type="entry name" value="RIBOSOMAL_S2_1"/>
    <property type="match status" value="1"/>
</dbReference>
<dbReference type="PROSITE" id="PS00963">
    <property type="entry name" value="RIBOSOMAL_S2_2"/>
    <property type="match status" value="1"/>
</dbReference>
<feature type="chain" id="PRO_1000194334" description="Small ribosomal subunit protein uS2">
    <location>
        <begin position="1"/>
        <end position="241"/>
    </location>
</feature>
<accession>B8F3R7</accession>
<proteinExistence type="inferred from homology"/>
<protein>
    <recommendedName>
        <fullName evidence="1">Small ribosomal subunit protein uS2</fullName>
    </recommendedName>
    <alternativeName>
        <fullName evidence="2">30S ribosomal protein S2</fullName>
    </alternativeName>
</protein>
<comment type="similarity">
    <text evidence="1">Belongs to the universal ribosomal protein uS2 family.</text>
</comment>
<keyword id="KW-1185">Reference proteome</keyword>
<keyword id="KW-0687">Ribonucleoprotein</keyword>
<keyword id="KW-0689">Ribosomal protein</keyword>
<gene>
    <name evidence="1" type="primary">rpsB</name>
    <name type="ordered locus">HAPS_0281</name>
</gene>
<sequence length="241" mass="26331">MAQVSMRDMLNAGVHFGHQTRYWNPQMKPYIFGARNGVHIINLEKTLPLFNDALAELTRIASNNGKILFVGTKRAASDAVKAAAVESQQFYVNHRWLGGMLTNWKTVRQSIKRLKDLEAQSQDGTFDKLTKKEALDRTRDMAKLELSLGGIKDMAGLPDAIFVIGADYEHIAIKEANNLGIPVFAIVDTNASPAGVNHVIPGNDDAARAIQLYLDAAVAAIKEGRGQETVAAEFVAEEAAE</sequence>
<reference key="1">
    <citation type="journal article" date="2009" name="J. Bacteriol.">
        <title>Complete genome sequence of Haemophilus parasuis SH0165.</title>
        <authorList>
            <person name="Yue M."/>
            <person name="Yang F."/>
            <person name="Yang J."/>
            <person name="Bei W."/>
            <person name="Cai X."/>
            <person name="Chen L."/>
            <person name="Dong J."/>
            <person name="Zhou R."/>
            <person name="Jin M."/>
            <person name="Jin Q."/>
            <person name="Chen H."/>
        </authorList>
    </citation>
    <scope>NUCLEOTIDE SEQUENCE [LARGE SCALE GENOMIC DNA]</scope>
    <source>
        <strain>SH0165</strain>
    </source>
</reference>
<name>RS2_GLAP5</name>